<sequence length="135" mass="15534">MIYGNGIDIQEIRKIQKAQEKRESFAKRILTVNELAIFEKYKGNRKYEFLAGRFSAKEAFSKAYGTGIGKKVGFQDIEILNDNQTGRPEIVKFPGDNKLQAKISISHSGEYVVTEVILEKLTWQTKMKKFLIKQK</sequence>
<dbReference type="EC" id="2.7.8.7" evidence="1"/>
<dbReference type="EMBL" id="CP000233">
    <property type="protein sequence ID" value="ABD99170.1"/>
    <property type="molecule type" value="Genomic_DNA"/>
</dbReference>
<dbReference type="RefSeq" id="WP_003704211.1">
    <property type="nucleotide sequence ID" value="NC_007929.1"/>
</dbReference>
<dbReference type="RefSeq" id="YP_535253.1">
    <property type="nucleotide sequence ID" value="NC_007929.1"/>
</dbReference>
<dbReference type="SMR" id="Q1WV15"/>
<dbReference type="STRING" id="362948.LSL_0357"/>
<dbReference type="KEGG" id="lsl:LSL_0357"/>
<dbReference type="PATRIC" id="fig|362948.14.peg.433"/>
<dbReference type="HOGENOM" id="CLU_089696_1_2_9"/>
<dbReference type="OrthoDB" id="517356at2"/>
<dbReference type="Proteomes" id="UP000006559">
    <property type="component" value="Chromosome"/>
</dbReference>
<dbReference type="GO" id="GO:0005737">
    <property type="term" value="C:cytoplasm"/>
    <property type="evidence" value="ECO:0007669"/>
    <property type="project" value="UniProtKB-SubCell"/>
</dbReference>
<dbReference type="GO" id="GO:0008897">
    <property type="term" value="F:holo-[acyl-carrier-protein] synthase activity"/>
    <property type="evidence" value="ECO:0007669"/>
    <property type="project" value="UniProtKB-UniRule"/>
</dbReference>
<dbReference type="GO" id="GO:0000287">
    <property type="term" value="F:magnesium ion binding"/>
    <property type="evidence" value="ECO:0007669"/>
    <property type="project" value="UniProtKB-UniRule"/>
</dbReference>
<dbReference type="GO" id="GO:0006633">
    <property type="term" value="P:fatty acid biosynthetic process"/>
    <property type="evidence" value="ECO:0007669"/>
    <property type="project" value="UniProtKB-UniRule"/>
</dbReference>
<dbReference type="Gene3D" id="3.90.470.20">
    <property type="entry name" value="4'-phosphopantetheinyl transferase domain"/>
    <property type="match status" value="1"/>
</dbReference>
<dbReference type="HAMAP" id="MF_00101">
    <property type="entry name" value="AcpS"/>
    <property type="match status" value="1"/>
</dbReference>
<dbReference type="InterPro" id="IPR008278">
    <property type="entry name" value="4-PPantetheinyl_Trfase_dom"/>
</dbReference>
<dbReference type="InterPro" id="IPR037143">
    <property type="entry name" value="4-PPantetheinyl_Trfase_dom_sf"/>
</dbReference>
<dbReference type="InterPro" id="IPR002582">
    <property type="entry name" value="ACPS"/>
</dbReference>
<dbReference type="InterPro" id="IPR004568">
    <property type="entry name" value="Ppantetheine-prot_Trfase_dom"/>
</dbReference>
<dbReference type="NCBIfam" id="TIGR00516">
    <property type="entry name" value="acpS"/>
    <property type="match status" value="1"/>
</dbReference>
<dbReference type="NCBIfam" id="TIGR00556">
    <property type="entry name" value="pantethn_trn"/>
    <property type="match status" value="1"/>
</dbReference>
<dbReference type="Pfam" id="PF01648">
    <property type="entry name" value="ACPS"/>
    <property type="match status" value="1"/>
</dbReference>
<dbReference type="SUPFAM" id="SSF56214">
    <property type="entry name" value="4'-phosphopantetheinyl transferase"/>
    <property type="match status" value="1"/>
</dbReference>
<name>ACPS_LIGS1</name>
<keyword id="KW-0963">Cytoplasm</keyword>
<keyword id="KW-0275">Fatty acid biosynthesis</keyword>
<keyword id="KW-0276">Fatty acid metabolism</keyword>
<keyword id="KW-0444">Lipid biosynthesis</keyword>
<keyword id="KW-0443">Lipid metabolism</keyword>
<keyword id="KW-0460">Magnesium</keyword>
<keyword id="KW-0479">Metal-binding</keyword>
<keyword id="KW-1185">Reference proteome</keyword>
<keyword id="KW-0808">Transferase</keyword>
<reference key="1">
    <citation type="journal article" date="2006" name="Proc. Natl. Acad. Sci. U.S.A.">
        <title>Multireplicon genome architecture of Lactobacillus salivarius.</title>
        <authorList>
            <person name="Claesson M.J."/>
            <person name="Li Y."/>
            <person name="Leahy S."/>
            <person name="Canchaya C."/>
            <person name="van Pijkeren J.P."/>
            <person name="Cerdeno-Tarraga A.M."/>
            <person name="Parkhill J."/>
            <person name="Flynn S."/>
            <person name="O'Sullivan G.C."/>
            <person name="Collins J.K."/>
            <person name="Higgins D."/>
            <person name="Shanahan F."/>
            <person name="Fitzgerald G.F."/>
            <person name="van Sinderen D."/>
            <person name="O'Toole P.W."/>
        </authorList>
    </citation>
    <scope>NUCLEOTIDE SEQUENCE [LARGE SCALE GENOMIC DNA]</scope>
    <source>
        <strain>UCC118</strain>
    </source>
</reference>
<accession>Q1WV15</accession>
<organism>
    <name type="scientific">Ligilactobacillus salivarius (strain UCC118)</name>
    <name type="common">Lactobacillus salivarius</name>
    <dbReference type="NCBI Taxonomy" id="362948"/>
    <lineage>
        <taxon>Bacteria</taxon>
        <taxon>Bacillati</taxon>
        <taxon>Bacillota</taxon>
        <taxon>Bacilli</taxon>
        <taxon>Lactobacillales</taxon>
        <taxon>Lactobacillaceae</taxon>
        <taxon>Ligilactobacillus</taxon>
    </lineage>
</organism>
<proteinExistence type="inferred from homology"/>
<comment type="function">
    <text evidence="1">Transfers the 4'-phosphopantetheine moiety from coenzyme A to a Ser of acyl-carrier-protein.</text>
</comment>
<comment type="catalytic activity">
    <reaction evidence="1">
        <text>apo-[ACP] + CoA = holo-[ACP] + adenosine 3',5'-bisphosphate + H(+)</text>
        <dbReference type="Rhea" id="RHEA:12068"/>
        <dbReference type="Rhea" id="RHEA-COMP:9685"/>
        <dbReference type="Rhea" id="RHEA-COMP:9690"/>
        <dbReference type="ChEBI" id="CHEBI:15378"/>
        <dbReference type="ChEBI" id="CHEBI:29999"/>
        <dbReference type="ChEBI" id="CHEBI:57287"/>
        <dbReference type="ChEBI" id="CHEBI:58343"/>
        <dbReference type="ChEBI" id="CHEBI:64479"/>
        <dbReference type="EC" id="2.7.8.7"/>
    </reaction>
</comment>
<comment type="cofactor">
    <cofactor evidence="1">
        <name>Mg(2+)</name>
        <dbReference type="ChEBI" id="CHEBI:18420"/>
    </cofactor>
</comment>
<comment type="subcellular location">
    <subcellularLocation>
        <location evidence="1">Cytoplasm</location>
    </subcellularLocation>
</comment>
<comment type="similarity">
    <text evidence="1">Belongs to the P-Pant transferase superfamily. AcpS family.</text>
</comment>
<gene>
    <name evidence="1" type="primary">acpS</name>
    <name type="ordered locus">LSL_0357</name>
</gene>
<protein>
    <recommendedName>
        <fullName evidence="1">Holo-[acyl-carrier-protein] synthase</fullName>
        <shortName evidence="1">Holo-ACP synthase</shortName>
        <ecNumber evidence="1">2.7.8.7</ecNumber>
    </recommendedName>
    <alternativeName>
        <fullName evidence="1">4'-phosphopantetheinyl transferase AcpS</fullName>
    </alternativeName>
</protein>
<feature type="chain" id="PRO_1000008442" description="Holo-[acyl-carrier-protein] synthase">
    <location>
        <begin position="1"/>
        <end position="135"/>
    </location>
</feature>
<feature type="binding site" evidence="1">
    <location>
        <position position="8"/>
    </location>
    <ligand>
        <name>Mg(2+)</name>
        <dbReference type="ChEBI" id="CHEBI:18420"/>
    </ligand>
</feature>
<feature type="binding site" evidence="1">
    <location>
        <position position="58"/>
    </location>
    <ligand>
        <name>Mg(2+)</name>
        <dbReference type="ChEBI" id="CHEBI:18420"/>
    </ligand>
</feature>
<evidence type="ECO:0000255" key="1">
    <source>
        <dbReference type="HAMAP-Rule" id="MF_00101"/>
    </source>
</evidence>